<proteinExistence type="inferred from homology"/>
<dbReference type="EMBL" id="CP000431">
    <property type="protein sequence ID" value="ABG93288.1"/>
    <property type="molecule type" value="Genomic_DNA"/>
</dbReference>
<dbReference type="RefSeq" id="WP_009474166.1">
    <property type="nucleotide sequence ID" value="NC_008268.1"/>
</dbReference>
<dbReference type="SMR" id="Q0SGP8"/>
<dbReference type="KEGG" id="rha:RHA1_ro01473"/>
<dbReference type="eggNOG" id="COG0224">
    <property type="taxonomic scope" value="Bacteria"/>
</dbReference>
<dbReference type="HOGENOM" id="CLU_050669_0_0_11"/>
<dbReference type="OrthoDB" id="9812769at2"/>
<dbReference type="Proteomes" id="UP000008710">
    <property type="component" value="Chromosome"/>
</dbReference>
<dbReference type="GO" id="GO:0005886">
    <property type="term" value="C:plasma membrane"/>
    <property type="evidence" value="ECO:0007669"/>
    <property type="project" value="UniProtKB-SubCell"/>
</dbReference>
<dbReference type="GO" id="GO:0045259">
    <property type="term" value="C:proton-transporting ATP synthase complex"/>
    <property type="evidence" value="ECO:0007669"/>
    <property type="project" value="UniProtKB-KW"/>
</dbReference>
<dbReference type="GO" id="GO:0005524">
    <property type="term" value="F:ATP binding"/>
    <property type="evidence" value="ECO:0007669"/>
    <property type="project" value="UniProtKB-UniRule"/>
</dbReference>
<dbReference type="GO" id="GO:0046933">
    <property type="term" value="F:proton-transporting ATP synthase activity, rotational mechanism"/>
    <property type="evidence" value="ECO:0007669"/>
    <property type="project" value="UniProtKB-UniRule"/>
</dbReference>
<dbReference type="GO" id="GO:0042777">
    <property type="term" value="P:proton motive force-driven plasma membrane ATP synthesis"/>
    <property type="evidence" value="ECO:0007669"/>
    <property type="project" value="UniProtKB-UniRule"/>
</dbReference>
<dbReference type="CDD" id="cd12151">
    <property type="entry name" value="F1-ATPase_gamma"/>
    <property type="match status" value="1"/>
</dbReference>
<dbReference type="Gene3D" id="3.40.1380.10">
    <property type="match status" value="1"/>
</dbReference>
<dbReference type="Gene3D" id="1.10.287.80">
    <property type="entry name" value="ATP synthase, gamma subunit, helix hairpin domain"/>
    <property type="match status" value="2"/>
</dbReference>
<dbReference type="HAMAP" id="MF_00815">
    <property type="entry name" value="ATP_synth_gamma_bact"/>
    <property type="match status" value="1"/>
</dbReference>
<dbReference type="InterPro" id="IPR035968">
    <property type="entry name" value="ATP_synth_F1_ATPase_gsu"/>
</dbReference>
<dbReference type="InterPro" id="IPR000131">
    <property type="entry name" value="ATP_synth_F1_gsu"/>
</dbReference>
<dbReference type="InterPro" id="IPR023632">
    <property type="entry name" value="ATP_synth_F1_gsu_CS"/>
</dbReference>
<dbReference type="NCBIfam" id="TIGR01146">
    <property type="entry name" value="ATPsyn_F1gamma"/>
    <property type="match status" value="1"/>
</dbReference>
<dbReference type="NCBIfam" id="NF004145">
    <property type="entry name" value="PRK05621.1-2"/>
    <property type="match status" value="1"/>
</dbReference>
<dbReference type="PANTHER" id="PTHR11693">
    <property type="entry name" value="ATP SYNTHASE GAMMA CHAIN"/>
    <property type="match status" value="1"/>
</dbReference>
<dbReference type="PANTHER" id="PTHR11693:SF22">
    <property type="entry name" value="ATP SYNTHASE SUBUNIT GAMMA, MITOCHONDRIAL"/>
    <property type="match status" value="1"/>
</dbReference>
<dbReference type="Pfam" id="PF00231">
    <property type="entry name" value="ATP-synt"/>
    <property type="match status" value="1"/>
</dbReference>
<dbReference type="PRINTS" id="PR00126">
    <property type="entry name" value="ATPASEGAMMA"/>
</dbReference>
<dbReference type="SUPFAM" id="SSF52943">
    <property type="entry name" value="ATP synthase (F1-ATPase), gamma subunit"/>
    <property type="match status" value="1"/>
</dbReference>
<dbReference type="PROSITE" id="PS00153">
    <property type="entry name" value="ATPASE_GAMMA"/>
    <property type="match status" value="1"/>
</dbReference>
<accession>Q0SGP8</accession>
<feature type="chain" id="PRO_1000053312" description="ATP synthase gamma chain">
    <location>
        <begin position="1"/>
        <end position="326"/>
    </location>
</feature>
<sequence>MASILELRSRIKSVNSTKKITKAQELIATSRITKAQSRVAAAKPYAEEITKVLSELASASASLDHPLLNERTDPKRAAVLVVTSDRGMCGGYNSNVLKEAEELFQLLRSEGKDPVIYVLGSKGLGYYTFRGRDLGGAWTGFSQDPGYSDAAKASRHLVDLFMAGSGSEVPAPNGEGTIEGVDELHIVYTRFVSMLTQSPEVRRMAPLEVMVSEERVELGEDMLSNGHGSSDSEPVAGYNFEPEPDKLLGALLPKYISTRIYSSLLDAAASESAARRTAMKAATDNANELVNTLSRQANQARQAQITQEISEIVGGANALASSAGSD</sequence>
<reference key="1">
    <citation type="journal article" date="2006" name="Proc. Natl. Acad. Sci. U.S.A.">
        <title>The complete genome of Rhodococcus sp. RHA1 provides insights into a catabolic powerhouse.</title>
        <authorList>
            <person name="McLeod M.P."/>
            <person name="Warren R.L."/>
            <person name="Hsiao W.W.L."/>
            <person name="Araki N."/>
            <person name="Myhre M."/>
            <person name="Fernandes C."/>
            <person name="Miyazawa D."/>
            <person name="Wong W."/>
            <person name="Lillquist A.L."/>
            <person name="Wang D."/>
            <person name="Dosanjh M."/>
            <person name="Hara H."/>
            <person name="Petrescu A."/>
            <person name="Morin R.D."/>
            <person name="Yang G."/>
            <person name="Stott J.M."/>
            <person name="Schein J.E."/>
            <person name="Shin H."/>
            <person name="Smailus D."/>
            <person name="Siddiqui A.S."/>
            <person name="Marra M.A."/>
            <person name="Jones S.J.M."/>
            <person name="Holt R."/>
            <person name="Brinkman F.S.L."/>
            <person name="Miyauchi K."/>
            <person name="Fukuda M."/>
            <person name="Davies J.E."/>
            <person name="Mohn W.W."/>
            <person name="Eltis L.D."/>
        </authorList>
    </citation>
    <scope>NUCLEOTIDE SEQUENCE [LARGE SCALE GENOMIC DNA]</scope>
    <source>
        <strain>RHA1</strain>
    </source>
</reference>
<gene>
    <name evidence="1" type="primary">atpG</name>
    <name type="ordered locus">RHA1_ro01473</name>
</gene>
<keyword id="KW-0066">ATP synthesis</keyword>
<keyword id="KW-1003">Cell membrane</keyword>
<keyword id="KW-0139">CF(1)</keyword>
<keyword id="KW-0375">Hydrogen ion transport</keyword>
<keyword id="KW-0406">Ion transport</keyword>
<keyword id="KW-0472">Membrane</keyword>
<keyword id="KW-0813">Transport</keyword>
<comment type="function">
    <text evidence="1">Produces ATP from ADP in the presence of a proton gradient across the membrane. The gamma chain is believed to be important in regulating ATPase activity and the flow of protons through the CF(0) complex.</text>
</comment>
<comment type="subunit">
    <text evidence="1">F-type ATPases have 2 components, CF(1) - the catalytic core - and CF(0) - the membrane proton channel. CF(1) has five subunits: alpha(3), beta(3), gamma(1), delta(1), epsilon(1). CF(0) has three main subunits: a, b and c.</text>
</comment>
<comment type="subcellular location">
    <subcellularLocation>
        <location evidence="1">Cell membrane</location>
        <topology evidence="1">Peripheral membrane protein</topology>
    </subcellularLocation>
</comment>
<comment type="similarity">
    <text evidence="1">Belongs to the ATPase gamma chain family.</text>
</comment>
<name>ATPG_RHOJR</name>
<evidence type="ECO:0000255" key="1">
    <source>
        <dbReference type="HAMAP-Rule" id="MF_00815"/>
    </source>
</evidence>
<organism>
    <name type="scientific">Rhodococcus jostii (strain RHA1)</name>
    <dbReference type="NCBI Taxonomy" id="101510"/>
    <lineage>
        <taxon>Bacteria</taxon>
        <taxon>Bacillati</taxon>
        <taxon>Actinomycetota</taxon>
        <taxon>Actinomycetes</taxon>
        <taxon>Mycobacteriales</taxon>
        <taxon>Nocardiaceae</taxon>
        <taxon>Rhodococcus</taxon>
    </lineage>
</organism>
<protein>
    <recommendedName>
        <fullName evidence="1">ATP synthase gamma chain</fullName>
    </recommendedName>
    <alternativeName>
        <fullName evidence="1">ATP synthase F1 sector gamma subunit</fullName>
    </alternativeName>
    <alternativeName>
        <fullName evidence="1">F-ATPase gamma subunit</fullName>
    </alternativeName>
</protein>